<dbReference type="EMBL" id="LT708304">
    <property type="protein sequence ID" value="SIU02576.1"/>
    <property type="molecule type" value="Genomic_DNA"/>
</dbReference>
<dbReference type="RefSeq" id="NP_857580.1">
    <property type="nucleotide sequence ID" value="NC_002945.3"/>
</dbReference>
<dbReference type="RefSeq" id="WP_003400164.1">
    <property type="nucleotide sequence ID" value="NC_002945.4"/>
</dbReference>
<dbReference type="BMRB" id="P0A617"/>
<dbReference type="SMR" id="P0A617"/>
<dbReference type="GeneID" id="45427914"/>
<dbReference type="KEGG" id="mbo:BQ2027_MB3945"/>
<dbReference type="PATRIC" id="fig|233413.5.peg.4323"/>
<dbReference type="Proteomes" id="UP000001419">
    <property type="component" value="Chromosome"/>
</dbReference>
<dbReference type="GO" id="GO:0005829">
    <property type="term" value="C:cytosol"/>
    <property type="evidence" value="ECO:0007669"/>
    <property type="project" value="TreeGrafter"/>
</dbReference>
<dbReference type="GO" id="GO:0015035">
    <property type="term" value="F:protein-disulfide reductase activity"/>
    <property type="evidence" value="ECO:0007669"/>
    <property type="project" value="InterPro"/>
</dbReference>
<dbReference type="GO" id="GO:0045454">
    <property type="term" value="P:cell redox homeostasis"/>
    <property type="evidence" value="ECO:0007669"/>
    <property type="project" value="TreeGrafter"/>
</dbReference>
<dbReference type="CDD" id="cd02947">
    <property type="entry name" value="TRX_family"/>
    <property type="match status" value="1"/>
</dbReference>
<dbReference type="FunFam" id="3.40.30.10:FF:000001">
    <property type="entry name" value="Thioredoxin"/>
    <property type="match status" value="1"/>
</dbReference>
<dbReference type="Gene3D" id="3.40.30.10">
    <property type="entry name" value="Glutaredoxin"/>
    <property type="match status" value="1"/>
</dbReference>
<dbReference type="InterPro" id="IPR005746">
    <property type="entry name" value="Thioredoxin"/>
</dbReference>
<dbReference type="InterPro" id="IPR036249">
    <property type="entry name" value="Thioredoxin-like_sf"/>
</dbReference>
<dbReference type="InterPro" id="IPR017937">
    <property type="entry name" value="Thioredoxin_CS"/>
</dbReference>
<dbReference type="InterPro" id="IPR013766">
    <property type="entry name" value="Thioredoxin_domain"/>
</dbReference>
<dbReference type="NCBIfam" id="TIGR01068">
    <property type="entry name" value="thioredoxin"/>
    <property type="match status" value="1"/>
</dbReference>
<dbReference type="PANTHER" id="PTHR45663">
    <property type="entry name" value="GEO12009P1"/>
    <property type="match status" value="1"/>
</dbReference>
<dbReference type="PANTHER" id="PTHR45663:SF11">
    <property type="entry name" value="GEO12009P1"/>
    <property type="match status" value="1"/>
</dbReference>
<dbReference type="Pfam" id="PF00085">
    <property type="entry name" value="Thioredoxin"/>
    <property type="match status" value="1"/>
</dbReference>
<dbReference type="PIRSF" id="PIRSF000077">
    <property type="entry name" value="Thioredoxin"/>
    <property type="match status" value="1"/>
</dbReference>
<dbReference type="PRINTS" id="PR00421">
    <property type="entry name" value="THIOREDOXIN"/>
</dbReference>
<dbReference type="SUPFAM" id="SSF52833">
    <property type="entry name" value="Thioredoxin-like"/>
    <property type="match status" value="1"/>
</dbReference>
<dbReference type="PROSITE" id="PS00194">
    <property type="entry name" value="THIOREDOXIN_1"/>
    <property type="match status" value="1"/>
</dbReference>
<dbReference type="PROSITE" id="PS51352">
    <property type="entry name" value="THIOREDOXIN_2"/>
    <property type="match status" value="1"/>
</dbReference>
<gene>
    <name type="primary">trxA</name>
    <name type="synonym">trx</name>
    <name type="synonym">trxC</name>
    <name type="ordered locus">BQ2027_MB3945</name>
</gene>
<comment type="function">
    <text evidence="1">Participates in various redox reactions through the reversible oxidation of its active center dithiol to a disulfide and catalyzes dithiol-disulfide exchange reactions.</text>
</comment>
<comment type="similarity">
    <text evidence="3">Belongs to the thioredoxin family.</text>
</comment>
<feature type="initiator methionine" description="Removed" evidence="1">
    <location>
        <position position="1"/>
    </location>
</feature>
<feature type="chain" id="PRO_0000120118" description="Thioredoxin">
    <location>
        <begin position="2"/>
        <end position="116"/>
    </location>
</feature>
<feature type="domain" description="Thioredoxin" evidence="2">
    <location>
        <begin position="2"/>
        <end position="113"/>
    </location>
</feature>
<feature type="disulfide bond" description="Redox-active" evidence="2">
    <location>
        <begin position="37"/>
        <end position="40"/>
    </location>
</feature>
<protein>
    <recommendedName>
        <fullName>Thioredoxin</fullName>
        <shortName>Trx</shortName>
    </recommendedName>
    <alternativeName>
        <fullName>MPT46</fullName>
    </alternativeName>
</protein>
<keyword id="KW-1015">Disulfide bond</keyword>
<keyword id="KW-0249">Electron transport</keyword>
<keyword id="KW-0676">Redox-active center</keyword>
<keyword id="KW-1185">Reference proteome</keyword>
<keyword id="KW-0813">Transport</keyword>
<evidence type="ECO:0000250" key="1"/>
<evidence type="ECO:0000255" key="2">
    <source>
        <dbReference type="PROSITE-ProRule" id="PRU00691"/>
    </source>
</evidence>
<evidence type="ECO:0000305" key="3"/>
<name>THIO_MYCBO</name>
<sequence>MTDSEKSATIKVTDASFATDVLSSNKPVLVDFWATWCGPCKMVAPVLEEIATERATDLTVAKLDVDTNPETARNFQVVSIPTLILFKDGQPVKRIVGAKGKAALLRELSDVVPNLN</sequence>
<accession>P0A617</accession>
<accession>A0A1R3Y5V1</accession>
<accession>P52229</accession>
<accession>X2BPP7</accession>
<organism>
    <name type="scientific">Mycobacterium bovis (strain ATCC BAA-935 / AF2122/97)</name>
    <dbReference type="NCBI Taxonomy" id="233413"/>
    <lineage>
        <taxon>Bacteria</taxon>
        <taxon>Bacillati</taxon>
        <taxon>Actinomycetota</taxon>
        <taxon>Actinomycetes</taxon>
        <taxon>Mycobacteriales</taxon>
        <taxon>Mycobacteriaceae</taxon>
        <taxon>Mycobacterium</taxon>
        <taxon>Mycobacterium tuberculosis complex</taxon>
    </lineage>
</organism>
<reference key="1">
    <citation type="journal article" date="2003" name="Proc. Natl. Acad. Sci. U.S.A.">
        <title>The complete genome sequence of Mycobacterium bovis.</title>
        <authorList>
            <person name="Garnier T."/>
            <person name="Eiglmeier K."/>
            <person name="Camus J.-C."/>
            <person name="Medina N."/>
            <person name="Mansoor H."/>
            <person name="Pryor M."/>
            <person name="Duthoy S."/>
            <person name="Grondin S."/>
            <person name="Lacroix C."/>
            <person name="Monsempe C."/>
            <person name="Simon S."/>
            <person name="Harris B."/>
            <person name="Atkin R."/>
            <person name="Doggett J."/>
            <person name="Mayes R."/>
            <person name="Keating L."/>
            <person name="Wheeler P.R."/>
            <person name="Parkhill J."/>
            <person name="Barrell B.G."/>
            <person name="Cole S.T."/>
            <person name="Gordon S.V."/>
            <person name="Hewinson R.G."/>
        </authorList>
    </citation>
    <scope>NUCLEOTIDE SEQUENCE [LARGE SCALE GENOMIC DNA]</scope>
    <source>
        <strain>ATCC BAA-935 / AF2122/97</strain>
    </source>
</reference>
<reference key="2">
    <citation type="journal article" date="2017" name="Genome Announc.">
        <title>Updated reference genome sequence and annotation of Mycobacterium bovis AF2122/97.</title>
        <authorList>
            <person name="Malone K.M."/>
            <person name="Farrell D."/>
            <person name="Stuber T.P."/>
            <person name="Schubert O.T."/>
            <person name="Aebersold R."/>
            <person name="Robbe-Austerman S."/>
            <person name="Gordon S.V."/>
        </authorList>
    </citation>
    <scope>NUCLEOTIDE SEQUENCE [LARGE SCALE GENOMIC DNA]</scope>
    <scope>GENOME REANNOTATION</scope>
    <source>
        <strain>ATCC BAA-935 / AF2122/97</strain>
    </source>
</reference>
<proteinExistence type="inferred from homology"/>